<protein>
    <recommendedName>
        <fullName evidence="1">ATP synthase subunit c</fullName>
    </recommendedName>
    <alternativeName>
        <fullName evidence="1">ATP synthase F(0) sector subunit c</fullName>
    </alternativeName>
    <alternativeName>
        <fullName evidence="1">F-type ATPase subunit c</fullName>
        <shortName evidence="1">F-ATPase subunit c</shortName>
    </alternativeName>
    <alternativeName>
        <fullName evidence="1">Lipid-binding protein</fullName>
    </alternativeName>
</protein>
<feature type="chain" id="PRO_1000184373" description="ATP synthase subunit c">
    <location>
        <begin position="1"/>
        <end position="79"/>
    </location>
</feature>
<feature type="transmembrane region" description="Helical" evidence="1">
    <location>
        <begin position="11"/>
        <end position="31"/>
    </location>
</feature>
<feature type="transmembrane region" description="Helical" evidence="1">
    <location>
        <begin position="53"/>
        <end position="73"/>
    </location>
</feature>
<feature type="site" description="Reversibly protonated during proton transport" evidence="1">
    <location>
        <position position="61"/>
    </location>
</feature>
<organism>
    <name type="scientific">Escherichia coli (strain SE11)</name>
    <dbReference type="NCBI Taxonomy" id="409438"/>
    <lineage>
        <taxon>Bacteria</taxon>
        <taxon>Pseudomonadati</taxon>
        <taxon>Pseudomonadota</taxon>
        <taxon>Gammaproteobacteria</taxon>
        <taxon>Enterobacterales</taxon>
        <taxon>Enterobacteriaceae</taxon>
        <taxon>Escherichia</taxon>
    </lineage>
</organism>
<reference key="1">
    <citation type="journal article" date="2008" name="DNA Res.">
        <title>Complete genome sequence and comparative analysis of the wild-type commensal Escherichia coli strain SE11 isolated from a healthy adult.</title>
        <authorList>
            <person name="Oshima K."/>
            <person name="Toh H."/>
            <person name="Ogura Y."/>
            <person name="Sasamoto H."/>
            <person name="Morita H."/>
            <person name="Park S.-H."/>
            <person name="Ooka T."/>
            <person name="Iyoda S."/>
            <person name="Taylor T.D."/>
            <person name="Hayashi T."/>
            <person name="Itoh K."/>
            <person name="Hattori M."/>
        </authorList>
    </citation>
    <scope>NUCLEOTIDE SEQUENCE [LARGE SCALE GENOMIC DNA]</scope>
    <source>
        <strain>SE11</strain>
    </source>
</reference>
<proteinExistence type="inferred from homology"/>
<gene>
    <name evidence="1" type="primary">atpE</name>
    <name type="ordered locus">ECSE_4027</name>
</gene>
<dbReference type="EMBL" id="AP009240">
    <property type="protein sequence ID" value="BAG79551.1"/>
    <property type="molecule type" value="Genomic_DNA"/>
</dbReference>
<dbReference type="RefSeq" id="WP_000429386.1">
    <property type="nucleotide sequence ID" value="NC_011415.1"/>
</dbReference>
<dbReference type="SMR" id="B6I3X4"/>
<dbReference type="GeneID" id="98390858"/>
<dbReference type="KEGG" id="ecy:ECSE_4027"/>
<dbReference type="HOGENOM" id="CLU_148047_1_0_6"/>
<dbReference type="Proteomes" id="UP000008199">
    <property type="component" value="Chromosome"/>
</dbReference>
<dbReference type="GO" id="GO:0005886">
    <property type="term" value="C:plasma membrane"/>
    <property type="evidence" value="ECO:0007669"/>
    <property type="project" value="UniProtKB-SubCell"/>
</dbReference>
<dbReference type="GO" id="GO:0045259">
    <property type="term" value="C:proton-transporting ATP synthase complex"/>
    <property type="evidence" value="ECO:0007669"/>
    <property type="project" value="UniProtKB-KW"/>
</dbReference>
<dbReference type="GO" id="GO:0033177">
    <property type="term" value="C:proton-transporting two-sector ATPase complex, proton-transporting domain"/>
    <property type="evidence" value="ECO:0007669"/>
    <property type="project" value="InterPro"/>
</dbReference>
<dbReference type="GO" id="GO:0008289">
    <property type="term" value="F:lipid binding"/>
    <property type="evidence" value="ECO:0007669"/>
    <property type="project" value="UniProtKB-KW"/>
</dbReference>
<dbReference type="GO" id="GO:0046933">
    <property type="term" value="F:proton-transporting ATP synthase activity, rotational mechanism"/>
    <property type="evidence" value="ECO:0007669"/>
    <property type="project" value="UniProtKB-UniRule"/>
</dbReference>
<dbReference type="CDD" id="cd18185">
    <property type="entry name" value="ATP-synt_Fo_c_ATPE"/>
    <property type="match status" value="1"/>
</dbReference>
<dbReference type="FunFam" id="1.20.20.10:FF:000002">
    <property type="entry name" value="ATP synthase subunit c"/>
    <property type="match status" value="1"/>
</dbReference>
<dbReference type="Gene3D" id="1.20.20.10">
    <property type="entry name" value="F1F0 ATP synthase subunit C"/>
    <property type="match status" value="1"/>
</dbReference>
<dbReference type="HAMAP" id="MF_01396">
    <property type="entry name" value="ATP_synth_c_bact"/>
    <property type="match status" value="1"/>
</dbReference>
<dbReference type="InterPro" id="IPR005953">
    <property type="entry name" value="ATP_synth_csu_bac/chlpt"/>
</dbReference>
<dbReference type="InterPro" id="IPR000454">
    <property type="entry name" value="ATP_synth_F0_csu"/>
</dbReference>
<dbReference type="InterPro" id="IPR020537">
    <property type="entry name" value="ATP_synth_F0_csu_DDCD_BS"/>
</dbReference>
<dbReference type="InterPro" id="IPR038662">
    <property type="entry name" value="ATP_synth_F0_csu_sf"/>
</dbReference>
<dbReference type="InterPro" id="IPR002379">
    <property type="entry name" value="ATPase_proteolipid_c-like_dom"/>
</dbReference>
<dbReference type="InterPro" id="IPR035921">
    <property type="entry name" value="F/V-ATP_Csub_sf"/>
</dbReference>
<dbReference type="NCBIfam" id="TIGR01260">
    <property type="entry name" value="ATP_synt_c"/>
    <property type="match status" value="1"/>
</dbReference>
<dbReference type="NCBIfam" id="NF005363">
    <property type="entry name" value="PRK06876.1"/>
    <property type="match status" value="1"/>
</dbReference>
<dbReference type="Pfam" id="PF00137">
    <property type="entry name" value="ATP-synt_C"/>
    <property type="match status" value="1"/>
</dbReference>
<dbReference type="PRINTS" id="PR00124">
    <property type="entry name" value="ATPASEC"/>
</dbReference>
<dbReference type="SUPFAM" id="SSF81333">
    <property type="entry name" value="F1F0 ATP synthase subunit C"/>
    <property type="match status" value="1"/>
</dbReference>
<dbReference type="PROSITE" id="PS00605">
    <property type="entry name" value="ATPASE_C"/>
    <property type="match status" value="1"/>
</dbReference>
<keyword id="KW-0066">ATP synthesis</keyword>
<keyword id="KW-0997">Cell inner membrane</keyword>
<keyword id="KW-1003">Cell membrane</keyword>
<keyword id="KW-0138">CF(0)</keyword>
<keyword id="KW-0375">Hydrogen ion transport</keyword>
<keyword id="KW-0406">Ion transport</keyword>
<keyword id="KW-0446">Lipid-binding</keyword>
<keyword id="KW-0472">Membrane</keyword>
<keyword id="KW-0812">Transmembrane</keyword>
<keyword id="KW-1133">Transmembrane helix</keyword>
<keyword id="KW-0813">Transport</keyword>
<comment type="function">
    <text evidence="1">F(1)F(0) ATP synthase produces ATP from ADP in the presence of a proton or sodium gradient. F-type ATPases consist of two structural domains, F(1) containing the extramembraneous catalytic core and F(0) containing the membrane proton channel, linked together by a central stalk and a peripheral stalk. During catalysis, ATP synthesis in the catalytic domain of F(1) is coupled via a rotary mechanism of the central stalk subunits to proton translocation.</text>
</comment>
<comment type="function">
    <text evidence="1">Key component of the F(0) channel; it plays a direct role in translocation across the membrane. A homomeric c-ring of between 10-14 subunits forms the central stalk rotor element with the F(1) delta and epsilon subunits.</text>
</comment>
<comment type="subunit">
    <text evidence="1">F-type ATPases have 2 components, F(1) - the catalytic core - and F(0) - the membrane proton channel. F(1) has five subunits: alpha(3), beta(3), gamma(1), delta(1), epsilon(1). F(0) has three main subunits: a(1), b(2) and c(10-14). The alpha and beta chains form an alternating ring which encloses part of the gamma chain. F(1) is attached to F(0) by a central stalk formed by the gamma and epsilon chains, while a peripheral stalk is formed by the delta and b chains.</text>
</comment>
<comment type="subcellular location">
    <subcellularLocation>
        <location evidence="1">Cell inner membrane</location>
        <topology evidence="1">Multi-pass membrane protein</topology>
    </subcellularLocation>
</comment>
<comment type="similarity">
    <text evidence="1">Belongs to the ATPase C chain family.</text>
</comment>
<name>ATPL_ECOSE</name>
<accession>B6I3X4</accession>
<evidence type="ECO:0000255" key="1">
    <source>
        <dbReference type="HAMAP-Rule" id="MF_01396"/>
    </source>
</evidence>
<sequence>MENLNMDLLYMAAAVMMGLAAIGAAIGIGILGGKFLEGAARQPDLIPLLRTQFFIVMGLVDAIPMIAVGLGLYVMFAVA</sequence>